<dbReference type="EMBL" id="CP001188">
    <property type="protein sequence ID" value="ACK98718.1"/>
    <property type="molecule type" value="Genomic_DNA"/>
</dbReference>
<dbReference type="RefSeq" id="WP_001063509.1">
    <property type="nucleotide sequence ID" value="NC_011774.1"/>
</dbReference>
<dbReference type="SMR" id="B7IZN7"/>
<dbReference type="KEGG" id="bcg:BCG9842_A0044"/>
<dbReference type="HOGENOM" id="CLU_165326_0_0_9"/>
<dbReference type="Proteomes" id="UP000006744">
    <property type="component" value="Plasmid pG9842_140"/>
</dbReference>
<dbReference type="InterPro" id="IPR007169">
    <property type="entry name" value="RemA-like"/>
</dbReference>
<dbReference type="PANTHER" id="PTHR38449:SF1">
    <property type="entry name" value="REGULATORY PROTEIN SSL2874-RELATED"/>
    <property type="match status" value="1"/>
</dbReference>
<dbReference type="PANTHER" id="PTHR38449">
    <property type="entry name" value="REGULATORY PROTEIN TM_1690-RELATED"/>
    <property type="match status" value="1"/>
</dbReference>
<dbReference type="Pfam" id="PF04025">
    <property type="entry name" value="RemA-like"/>
    <property type="match status" value="1"/>
</dbReference>
<proteinExistence type="inferred from homology"/>
<protein>
    <recommendedName>
        <fullName evidence="1">Putative regulatory protein BCG9842_A0044</fullName>
    </recommendedName>
</protein>
<reference key="1">
    <citation type="submission" date="2008-10" db="EMBL/GenBank/DDBJ databases">
        <title>Genome sequence of Bacillus cereus G9842.</title>
        <authorList>
            <person name="Dodson R.J."/>
            <person name="Durkin A.S."/>
            <person name="Rosovitz M.J."/>
            <person name="Rasko D.A."/>
            <person name="Hoffmaster A."/>
            <person name="Ravel J."/>
            <person name="Sutton G."/>
        </authorList>
    </citation>
    <scope>NUCLEOTIDE SEQUENCE [LARGE SCALE GENOMIC DNA]</scope>
    <source>
        <strain>G9842</strain>
    </source>
</reference>
<comment type="similarity">
    <text evidence="1">Belongs to the RemA family.</text>
</comment>
<name>Y6144_BACC2</name>
<geneLocation type="plasmid">
    <name>pG9842_140</name>
</geneLocation>
<evidence type="ECO:0000305" key="1"/>
<sequence>MNNNIHFVDIGFSNYVDAGKILTVNRPDSSPIKRSLQHAKEAGRFLDLTQGKKTRSIITQSSNTGLIFTASAVQTSTIMNRIRETEVKQSKRMAGKLIEKSVEVGNQ</sequence>
<gene>
    <name type="ordered locus">BCG9842_A0044</name>
</gene>
<keyword id="KW-0614">Plasmid</keyword>
<accession>B7IZN7</accession>
<organism>
    <name type="scientific">Bacillus cereus (strain G9842)</name>
    <dbReference type="NCBI Taxonomy" id="405531"/>
    <lineage>
        <taxon>Bacteria</taxon>
        <taxon>Bacillati</taxon>
        <taxon>Bacillota</taxon>
        <taxon>Bacilli</taxon>
        <taxon>Bacillales</taxon>
        <taxon>Bacillaceae</taxon>
        <taxon>Bacillus</taxon>
        <taxon>Bacillus cereus group</taxon>
    </lineage>
</organism>
<feature type="chain" id="PRO_0000373778" description="Putative regulatory protein BCG9842_A0044">
    <location>
        <begin position="1"/>
        <end position="107"/>
    </location>
</feature>